<organism>
    <name type="scientific">Mycobacterium tuberculosis (strain ATCC 25618 / H37Rv)</name>
    <dbReference type="NCBI Taxonomy" id="83332"/>
    <lineage>
        <taxon>Bacteria</taxon>
        <taxon>Bacillati</taxon>
        <taxon>Actinomycetota</taxon>
        <taxon>Actinomycetes</taxon>
        <taxon>Mycobacteriales</taxon>
        <taxon>Mycobacteriaceae</taxon>
        <taxon>Mycobacterium</taxon>
        <taxon>Mycobacterium tuberculosis complex</taxon>
    </lineage>
</organism>
<feature type="chain" id="PRO_0000182708" description="Uncharacterized protein Rv2913c">
    <location>
        <begin position="1"/>
        <end position="611"/>
    </location>
</feature>
<sequence>MLAWRQLNDLEETVTYDVIIRDGLWFDGTGNAPLTRTLGIRDGVVATVAAGALDETGCPEVVDAAGKWVVPGFIDVHTHYDAEVLLDPGLRESVRHGVTTVLLGNCSLSTVYANSEDAADLFSRVEAVPREFVLGALRDNQTWSTPAEYIEAIDALPLGPNVSSLLGHSDLRTAVLGLDRATDDTVRPTEAELAKMAKLLDEALEAGMLGMSGMDAAIDKLDGDRFRSRALPSTFATWRERRKLISVLRHRGRILQSAPDVDNPVSALLFFLASSRIFNRRKGVRMSMLVSADAKSMPLAVHVFGLGTRVLNKLLGSQVRFQHLPVPFELYSDGIDLPVFEEFGAGTAALHLRDQLQRNELLADRSYRRSFRREFDRIKLGPSLWHRDFHDAVIVECPDKSLIGKSFGAIADERGLHPLDAFLDVLVDNGERNVRWTTIVANHRPNQLNKLAAEPSVHMGFSDAGAHLRNMAFYNFGLRLLKRARDADRAGQPFLSIERAVYRLTGELAEWFGIGAGTLRQGDRADFAVIDPTHLDESVDGYHEEAVPYYGGLRRMVNRNDATVVATGVGGTVVFRGGQFGGQFRDGYGQNVKSGRYLRAGELGAALSRSA</sequence>
<dbReference type="EMBL" id="AL123456">
    <property type="protein sequence ID" value="CCP45715.1"/>
    <property type="molecule type" value="Genomic_DNA"/>
</dbReference>
<dbReference type="PIR" id="D70928">
    <property type="entry name" value="D70928"/>
</dbReference>
<dbReference type="RefSeq" id="NP_217429.1">
    <property type="nucleotide sequence ID" value="NC_000962.3"/>
</dbReference>
<dbReference type="RefSeq" id="WP_003899536.1">
    <property type="nucleotide sequence ID" value="NZ_NVQJ01000006.1"/>
</dbReference>
<dbReference type="SMR" id="P9WJH9"/>
<dbReference type="STRING" id="83332.Rv2913c"/>
<dbReference type="PaxDb" id="83332-Rv2913c"/>
<dbReference type="GeneID" id="887809"/>
<dbReference type="KEGG" id="mtu:Rv2913c"/>
<dbReference type="KEGG" id="mtv:RVBD_2913c"/>
<dbReference type="TubercuList" id="Rv2913c"/>
<dbReference type="eggNOG" id="COG3653">
    <property type="taxonomic scope" value="Bacteria"/>
</dbReference>
<dbReference type="InParanoid" id="P9WJH9"/>
<dbReference type="OrthoDB" id="9766983at2"/>
<dbReference type="PhylomeDB" id="P9WJH9"/>
<dbReference type="Proteomes" id="UP000001584">
    <property type="component" value="Chromosome"/>
</dbReference>
<dbReference type="GO" id="GO:0005829">
    <property type="term" value="C:cytosol"/>
    <property type="evidence" value="ECO:0007005"/>
    <property type="project" value="MTBBASE"/>
</dbReference>
<dbReference type="GO" id="GO:0016812">
    <property type="term" value="F:hydrolase activity, acting on carbon-nitrogen (but not peptide) bonds, in cyclic amides"/>
    <property type="evidence" value="ECO:0000318"/>
    <property type="project" value="GO_Central"/>
</dbReference>
<dbReference type="Gene3D" id="3.20.20.140">
    <property type="entry name" value="Metal-dependent hydrolases"/>
    <property type="match status" value="1"/>
</dbReference>
<dbReference type="InterPro" id="IPR013108">
    <property type="entry name" value="Amidohydro_3"/>
</dbReference>
<dbReference type="InterPro" id="IPR011059">
    <property type="entry name" value="Metal-dep_hydrolase_composite"/>
</dbReference>
<dbReference type="InterPro" id="IPR032466">
    <property type="entry name" value="Metal_Hydrolase"/>
</dbReference>
<dbReference type="InterPro" id="IPR050378">
    <property type="entry name" value="Metallo-dep_Hydrolases_sf"/>
</dbReference>
<dbReference type="PANTHER" id="PTHR11647:SF1">
    <property type="entry name" value="COLLAPSIN RESPONSE MEDIATOR PROTEIN"/>
    <property type="match status" value="1"/>
</dbReference>
<dbReference type="PANTHER" id="PTHR11647">
    <property type="entry name" value="HYDRANTOINASE/DIHYDROPYRIMIDINASE FAMILY MEMBER"/>
    <property type="match status" value="1"/>
</dbReference>
<dbReference type="Pfam" id="PF07969">
    <property type="entry name" value="Amidohydro_3"/>
    <property type="match status" value="1"/>
</dbReference>
<dbReference type="SUPFAM" id="SSF51338">
    <property type="entry name" value="Composite domain of metallo-dependent hydrolases"/>
    <property type="match status" value="1"/>
</dbReference>
<dbReference type="SUPFAM" id="SSF51556">
    <property type="entry name" value="Metallo-dependent hydrolases"/>
    <property type="match status" value="1"/>
</dbReference>
<proteinExistence type="evidence at protein level"/>
<gene>
    <name type="ordered locus">Rv2913c</name>
    <name type="ORF">MTCY274.45c</name>
    <name type="ORF">MTCY338.01c</name>
</gene>
<keyword id="KW-0378">Hydrolase</keyword>
<keyword id="KW-1185">Reference proteome</keyword>
<protein>
    <recommendedName>
        <fullName>Uncharacterized protein Rv2913c</fullName>
    </recommendedName>
</protein>
<reference key="1">
    <citation type="journal article" date="1998" name="Nature">
        <title>Deciphering the biology of Mycobacterium tuberculosis from the complete genome sequence.</title>
        <authorList>
            <person name="Cole S.T."/>
            <person name="Brosch R."/>
            <person name="Parkhill J."/>
            <person name="Garnier T."/>
            <person name="Churcher C.M."/>
            <person name="Harris D.E."/>
            <person name="Gordon S.V."/>
            <person name="Eiglmeier K."/>
            <person name="Gas S."/>
            <person name="Barry C.E. III"/>
            <person name="Tekaia F."/>
            <person name="Badcock K."/>
            <person name="Basham D."/>
            <person name="Brown D."/>
            <person name="Chillingworth T."/>
            <person name="Connor R."/>
            <person name="Davies R.M."/>
            <person name="Devlin K."/>
            <person name="Feltwell T."/>
            <person name="Gentles S."/>
            <person name="Hamlin N."/>
            <person name="Holroyd S."/>
            <person name="Hornsby T."/>
            <person name="Jagels K."/>
            <person name="Krogh A."/>
            <person name="McLean J."/>
            <person name="Moule S."/>
            <person name="Murphy L.D."/>
            <person name="Oliver S."/>
            <person name="Osborne J."/>
            <person name="Quail M.A."/>
            <person name="Rajandream M.A."/>
            <person name="Rogers J."/>
            <person name="Rutter S."/>
            <person name="Seeger K."/>
            <person name="Skelton S."/>
            <person name="Squares S."/>
            <person name="Squares R."/>
            <person name="Sulston J.E."/>
            <person name="Taylor K."/>
            <person name="Whitehead S."/>
            <person name="Barrell B.G."/>
        </authorList>
    </citation>
    <scope>NUCLEOTIDE SEQUENCE [LARGE SCALE GENOMIC DNA]</scope>
    <source>
        <strain>ATCC 25618 / H37Rv</strain>
    </source>
</reference>
<reference key="2">
    <citation type="journal article" date="2011" name="Mol. Cell. Proteomics">
        <title>Proteogenomic analysis of Mycobacterium tuberculosis by high resolution mass spectrometry.</title>
        <authorList>
            <person name="Kelkar D.S."/>
            <person name="Kumar D."/>
            <person name="Kumar P."/>
            <person name="Balakrishnan L."/>
            <person name="Muthusamy B."/>
            <person name="Yadav A.K."/>
            <person name="Shrivastava P."/>
            <person name="Marimuthu A."/>
            <person name="Anand S."/>
            <person name="Sundaram H."/>
            <person name="Kingsbury R."/>
            <person name="Harsha H.C."/>
            <person name="Nair B."/>
            <person name="Prasad T.S."/>
            <person name="Chauhan D.S."/>
            <person name="Katoch K."/>
            <person name="Katoch V.M."/>
            <person name="Kumar P."/>
            <person name="Chaerkady R."/>
            <person name="Ramachandran S."/>
            <person name="Dash D."/>
            <person name="Pandey A."/>
        </authorList>
    </citation>
    <scope>IDENTIFICATION BY MASS SPECTROMETRY [LARGE SCALE ANALYSIS]</scope>
    <source>
        <strain>ATCC 25618 / H37Rv</strain>
    </source>
</reference>
<name>Y2913_MYCTU</name>
<accession>P9WJH9</accession>
<accession>L0TB05</accession>
<accession>P65530</accession>
<accession>Q10830</accession>
<evidence type="ECO:0000305" key="1"/>
<comment type="similarity">
    <text evidence="1">Belongs to the metallo-dependent hydrolases superfamily. N-acyl-D-amino-acid deacylase family.</text>
</comment>